<organism>
    <name type="scientific">Saccharomyces cerevisiae (strain ATCC 204508 / S288c)</name>
    <name type="common">Baker's yeast</name>
    <dbReference type="NCBI Taxonomy" id="559292"/>
    <lineage>
        <taxon>Eukaryota</taxon>
        <taxon>Fungi</taxon>
        <taxon>Dikarya</taxon>
        <taxon>Ascomycota</taxon>
        <taxon>Saccharomycotina</taxon>
        <taxon>Saccharomycetes</taxon>
        <taxon>Saccharomycetales</taxon>
        <taxon>Saccharomycetaceae</taxon>
        <taxon>Saccharomyces</taxon>
    </lineage>
</organism>
<accession>Q04471</accession>
<accession>D6VZT7</accession>
<name>YM04_YEAST</name>
<dbReference type="EC" id="4.-.-.-" evidence="3"/>
<dbReference type="EC" id="3.4.-.-" evidence="2"/>
<dbReference type="EMBL" id="Z49702">
    <property type="protein sequence ID" value="CAA89751.1"/>
    <property type="molecule type" value="Genomic_DNA"/>
</dbReference>
<dbReference type="EMBL" id="BK006946">
    <property type="protein sequence ID" value="DAA10011.1"/>
    <property type="molecule type" value="Genomic_DNA"/>
</dbReference>
<dbReference type="PIR" id="S54575">
    <property type="entry name" value="S54575"/>
</dbReference>
<dbReference type="RefSeq" id="NP_013832.1">
    <property type="nucleotide sequence ID" value="NM_001182614.1"/>
</dbReference>
<dbReference type="SMR" id="Q04471"/>
<dbReference type="BioGRID" id="35290">
    <property type="interactions" value="33"/>
</dbReference>
<dbReference type="DIP" id="DIP-5315N"/>
<dbReference type="FunCoup" id="Q04471">
    <property type="interactions" value="707"/>
</dbReference>
<dbReference type="STRING" id="4932.YMR114C"/>
<dbReference type="iPTMnet" id="Q04471"/>
<dbReference type="PaxDb" id="4932-YMR114C"/>
<dbReference type="PeptideAtlas" id="Q04471"/>
<dbReference type="EnsemblFungi" id="YMR114C_mRNA">
    <property type="protein sequence ID" value="YMR114C"/>
    <property type="gene ID" value="YMR114C"/>
</dbReference>
<dbReference type="GeneID" id="855141"/>
<dbReference type="KEGG" id="sce:YMR114C"/>
<dbReference type="AGR" id="SGD:S000004720"/>
<dbReference type="SGD" id="S000004720">
    <property type="gene designation" value="YMR114C"/>
</dbReference>
<dbReference type="VEuPathDB" id="FungiDB:YMR114C"/>
<dbReference type="eggNOG" id="KOG2618">
    <property type="taxonomic scope" value="Eukaryota"/>
</dbReference>
<dbReference type="GeneTree" id="ENSGT00390000018439"/>
<dbReference type="HOGENOM" id="CLU_035990_0_1_1"/>
<dbReference type="InParanoid" id="Q04471"/>
<dbReference type="OMA" id="MPCVLEP"/>
<dbReference type="OrthoDB" id="2111841at2759"/>
<dbReference type="BioCyc" id="YEAST:G3O-32809-MONOMER"/>
<dbReference type="BioGRID-ORCS" id="855141">
    <property type="hits" value="0 hits in 10 CRISPR screens"/>
</dbReference>
<dbReference type="PRO" id="PR:Q04471"/>
<dbReference type="Proteomes" id="UP000002311">
    <property type="component" value="Chromosome XIII"/>
</dbReference>
<dbReference type="RNAct" id="Q04471">
    <property type="molecule type" value="protein"/>
</dbReference>
<dbReference type="GO" id="GO:0005694">
    <property type="term" value="C:chromosome"/>
    <property type="evidence" value="ECO:0007669"/>
    <property type="project" value="UniProtKB-SubCell"/>
</dbReference>
<dbReference type="GO" id="GO:0005737">
    <property type="term" value="C:cytoplasm"/>
    <property type="evidence" value="ECO:0007005"/>
    <property type="project" value="SGD"/>
</dbReference>
<dbReference type="GO" id="GO:0005634">
    <property type="term" value="C:nucleus"/>
    <property type="evidence" value="ECO:0007005"/>
    <property type="project" value="SGD"/>
</dbReference>
<dbReference type="GO" id="GO:0016829">
    <property type="term" value="F:lyase activity"/>
    <property type="evidence" value="ECO:0007669"/>
    <property type="project" value="UniProtKB-KW"/>
</dbReference>
<dbReference type="GO" id="GO:0008233">
    <property type="term" value="F:peptidase activity"/>
    <property type="evidence" value="ECO:0007669"/>
    <property type="project" value="UniProtKB-KW"/>
</dbReference>
<dbReference type="GO" id="GO:0003697">
    <property type="term" value="F:single-stranded DNA binding"/>
    <property type="evidence" value="ECO:0007669"/>
    <property type="project" value="InterPro"/>
</dbReference>
<dbReference type="GO" id="GO:0106300">
    <property type="term" value="P:protein-DNA covalent cross-linking repair"/>
    <property type="evidence" value="ECO:0007669"/>
    <property type="project" value="InterPro"/>
</dbReference>
<dbReference type="GO" id="GO:0006508">
    <property type="term" value="P:proteolysis"/>
    <property type="evidence" value="ECO:0007669"/>
    <property type="project" value="UniProtKB-KW"/>
</dbReference>
<dbReference type="Gene3D" id="3.90.1680.10">
    <property type="entry name" value="SOS response associated peptidase-like"/>
    <property type="match status" value="1"/>
</dbReference>
<dbReference type="InterPro" id="IPR003738">
    <property type="entry name" value="SRAP"/>
</dbReference>
<dbReference type="InterPro" id="IPR036590">
    <property type="entry name" value="SRAP-like"/>
</dbReference>
<dbReference type="PANTHER" id="PTHR13604:SF0">
    <property type="entry name" value="ABASIC SITE PROCESSING PROTEIN HMCES"/>
    <property type="match status" value="1"/>
</dbReference>
<dbReference type="PANTHER" id="PTHR13604">
    <property type="entry name" value="DC12-RELATED"/>
    <property type="match status" value="1"/>
</dbReference>
<dbReference type="Pfam" id="PF02586">
    <property type="entry name" value="SRAP"/>
    <property type="match status" value="1"/>
</dbReference>
<dbReference type="SUPFAM" id="SSF143081">
    <property type="entry name" value="BB1717-like"/>
    <property type="match status" value="1"/>
</dbReference>
<protein>
    <recommendedName>
        <fullName evidence="5">Abasic site processing protein YMR114C</fullName>
        <ecNumber evidence="3">4.-.-.-</ecNumber>
    </recommendedName>
    <alternativeName>
        <fullName>Peptidase YMR114C</fullName>
        <ecNumber evidence="2">3.4.-.-</ecNumber>
    </alternativeName>
</protein>
<feature type="initiator methionine" description="Removed" evidence="2">
    <location>
        <position position="1"/>
    </location>
</feature>
<feature type="chain" id="PRO_0000203292" description="Abasic site processing protein YMR114C">
    <location>
        <begin position="2"/>
        <end position="368"/>
    </location>
</feature>
<feature type="region of interest" description="Disordered" evidence="4">
    <location>
        <begin position="25"/>
        <end position="48"/>
    </location>
</feature>
<feature type="region of interest" description="Disordered" evidence="4">
    <location>
        <begin position="270"/>
        <end position="368"/>
    </location>
</feature>
<feature type="compositionally biased region" description="Basic and acidic residues" evidence="4">
    <location>
        <begin position="37"/>
        <end position="46"/>
    </location>
</feature>
<feature type="compositionally biased region" description="Basic and acidic residues" evidence="4">
    <location>
        <begin position="281"/>
        <end position="296"/>
    </location>
</feature>
<feature type="compositionally biased region" description="Basic and acidic residues" evidence="4">
    <location>
        <begin position="304"/>
        <end position="313"/>
    </location>
</feature>
<feature type="compositionally biased region" description="Basic and acidic residues" evidence="4">
    <location>
        <begin position="326"/>
        <end position="349"/>
    </location>
</feature>
<feature type="active site" description="Nucleophile" evidence="3">
    <location>
        <position position="2"/>
    </location>
</feature>
<feature type="active site" evidence="3">
    <location>
        <position position="132"/>
    </location>
</feature>
<feature type="modified residue" description="Thiazolidine linkage to a ring-opened DNA abasic site" evidence="3">
    <location>
        <position position="2"/>
    </location>
</feature>
<feature type="modified residue" description="Phosphoserine" evidence="6">
    <location>
        <position position="338"/>
    </location>
</feature>
<gene>
    <name type="ordered locus">YMR114C</name>
    <name type="ORF">YM9718.13C</name>
</gene>
<reference key="1">
    <citation type="journal article" date="1997" name="Nature">
        <title>The nucleotide sequence of Saccharomyces cerevisiae chromosome XIII.</title>
        <authorList>
            <person name="Bowman S."/>
            <person name="Churcher C.M."/>
            <person name="Badcock K."/>
            <person name="Brown D."/>
            <person name="Chillingworth T."/>
            <person name="Connor R."/>
            <person name="Dedman K."/>
            <person name="Devlin K."/>
            <person name="Gentles S."/>
            <person name="Hamlin N."/>
            <person name="Hunt S."/>
            <person name="Jagels K."/>
            <person name="Lye G."/>
            <person name="Moule S."/>
            <person name="Odell C."/>
            <person name="Pearson D."/>
            <person name="Rajandream M.A."/>
            <person name="Rice P."/>
            <person name="Skelton J."/>
            <person name="Walsh S.V."/>
            <person name="Whitehead S."/>
            <person name="Barrell B.G."/>
        </authorList>
    </citation>
    <scope>NUCLEOTIDE SEQUENCE [LARGE SCALE GENOMIC DNA]</scope>
    <source>
        <strain>ATCC 204508 / S288c</strain>
    </source>
</reference>
<reference key="2">
    <citation type="journal article" date="2014" name="G3 (Bethesda)">
        <title>The reference genome sequence of Saccharomyces cerevisiae: Then and now.</title>
        <authorList>
            <person name="Engel S.R."/>
            <person name="Dietrich F.S."/>
            <person name="Fisk D.G."/>
            <person name="Binkley G."/>
            <person name="Balakrishnan R."/>
            <person name="Costanzo M.C."/>
            <person name="Dwight S.S."/>
            <person name="Hitz B.C."/>
            <person name="Karra K."/>
            <person name="Nash R.S."/>
            <person name="Weng S."/>
            <person name="Wong E.D."/>
            <person name="Lloyd P."/>
            <person name="Skrzypek M.S."/>
            <person name="Miyasato S.R."/>
            <person name="Simison M."/>
            <person name="Cherry J.M."/>
        </authorList>
    </citation>
    <scope>GENOME REANNOTATION</scope>
    <source>
        <strain>ATCC 204508 / S288c</strain>
    </source>
</reference>
<reference key="3">
    <citation type="journal article" date="2007" name="Proc. Natl. Acad. Sci. U.S.A.">
        <title>Analysis of phosphorylation sites on proteins from Saccharomyces cerevisiae by electron transfer dissociation (ETD) mass spectrometry.</title>
        <authorList>
            <person name="Chi A."/>
            <person name="Huttenhower C."/>
            <person name="Geer L.Y."/>
            <person name="Coon J.J."/>
            <person name="Syka J.E.P."/>
            <person name="Bai D.L."/>
            <person name="Shabanowitz J."/>
            <person name="Burke D.J."/>
            <person name="Troyanskaya O.G."/>
            <person name="Hunt D.F."/>
        </authorList>
    </citation>
    <scope>PHOSPHORYLATION [LARGE SCALE ANALYSIS] AT SER-338</scope>
    <scope>IDENTIFICATION BY MASS SPECTROMETRY [LARGE SCALE ANALYSIS]</scope>
</reference>
<evidence type="ECO:0000250" key="1">
    <source>
        <dbReference type="UniProtKB" id="P76318"/>
    </source>
</evidence>
<evidence type="ECO:0000250" key="2">
    <source>
        <dbReference type="UniProtKB" id="Q8R1M0"/>
    </source>
</evidence>
<evidence type="ECO:0000250" key="3">
    <source>
        <dbReference type="UniProtKB" id="Q96FZ2"/>
    </source>
</evidence>
<evidence type="ECO:0000256" key="4">
    <source>
        <dbReference type="SAM" id="MobiDB-lite"/>
    </source>
</evidence>
<evidence type="ECO:0000305" key="5"/>
<evidence type="ECO:0007744" key="6">
    <source>
    </source>
</evidence>
<keyword id="KW-0158">Chromosome</keyword>
<keyword id="KW-0190">Covalent protein-DNA linkage</keyword>
<keyword id="KW-0227">DNA damage</keyword>
<keyword id="KW-0238">DNA-binding</keyword>
<keyword id="KW-0378">Hydrolase</keyword>
<keyword id="KW-0456">Lyase</keyword>
<keyword id="KW-0597">Phosphoprotein</keyword>
<keyword id="KW-0645">Protease</keyword>
<keyword id="KW-1185">Reference proteome</keyword>
<comment type="function">
    <text evidence="2 3">Sensor of abasic sites in single-stranded DNA (ssDNA) required to preserve genome integrity by promoting error-free repair of abasic sites. Recognizes and binds abasic sites in ssDNA at replication forks and chemically modifies the lesion by forming a covalent cross-link with DNA: forms a stable thiazolidine linkage between a ring-opened abasic site and the alpha-amino and sulfhydryl substituents of its N-terminal catalytic cysteine residue. The DNA-protein cross-link is then reversed: able to catalyze the reversal of the thiazolidine cross-link and cycle between a cross-link and a non-cross-linked state depending on DNA context: mediates self-reversal of the thiazolidine cross-link in double stranded DNA. Acts as a protease: mediates autocatalytic processing of its N-terminal methionine in order to expose the catalytic cysteine.</text>
</comment>
<comment type="activity regulation">
    <text evidence="3">Formation and reversal of DNA-protein cross-link depends on DNA context. Catalyzes formation of the thiazolidine linkage in presence of abasic sites in single-stranded DNA. Mediates the reversal of the thiazolidine cross-link in presence of double stranded DNA.</text>
</comment>
<comment type="subcellular location">
    <subcellularLocation>
        <location evidence="3">Chromosome</location>
    </subcellularLocation>
    <text evidence="3">Localizes to replication forks.</text>
</comment>
<comment type="domain">
    <text evidence="1 3">The N-terminal catalytic Cys-2 residue forms a thiazolidine linkage to a ring-opened DNA abasic site (By similarity). Glu-132 catalyzes reversal of the thiazolidine linkage; self-reversal is favoured by duplex DNA formation (By similarity).</text>
</comment>
<comment type="similarity">
    <text evidence="5">Belongs to the SOS response-associated peptidase family.</text>
</comment>
<sequence>MCGRFALAYDSGDLPQLLRDWNLPVNTPKDASSNSQHPHDEEDTKDQPTVSKDIFKASYNISPTNYSAVYRPDTKAIQFMRWGLVPFWTKDVSQFKTYRTFNARLENLQESKMWMRPCEKKRCAVLMSGYFEWKTVGKKKTPYFISRRDGRLMFVAGMYDYVEKDDLYTFTIITAQGPRELEWLHERMPCVLEPGTESWDAWMDVDKTTWSTEELVKLLKPDYDESKLQFYQVTDDVGKTTNTGERLIKPLLKEDSDMFSVKREKEEALLENDNEQGIDNRGVKGDKSLKGEDVFNQKKSLKRNSYDGLKKNEEQEETTLPEEGSIGDRVKREEANLSPKREGNREKRNIVNMLGNQKDSRGKKKIKK</sequence>
<proteinExistence type="evidence at protein level"/>